<dbReference type="SMR" id="P0DJL2"/>
<dbReference type="GO" id="GO:0005576">
    <property type="term" value="C:extracellular region"/>
    <property type="evidence" value="ECO:0000314"/>
    <property type="project" value="UniProtKB"/>
</dbReference>
<dbReference type="GO" id="GO:0044218">
    <property type="term" value="C:other organism cell membrane"/>
    <property type="evidence" value="ECO:0000314"/>
    <property type="project" value="UniProtKB"/>
</dbReference>
<dbReference type="GO" id="GO:0090729">
    <property type="term" value="F:toxin activity"/>
    <property type="evidence" value="ECO:0007669"/>
    <property type="project" value="UniProtKB-KW"/>
</dbReference>
<dbReference type="GO" id="GO:0044478">
    <property type="term" value="P:venom-mediated platelet aggregation"/>
    <property type="evidence" value="ECO:0000314"/>
    <property type="project" value="UniProtKB"/>
</dbReference>
<dbReference type="FunFam" id="3.10.100.10:FF:000087">
    <property type="entry name" value="Snaclec rhodocetin subunit delta"/>
    <property type="match status" value="1"/>
</dbReference>
<dbReference type="Gene3D" id="3.10.100.10">
    <property type="entry name" value="Mannose-Binding Protein A, subunit A"/>
    <property type="match status" value="1"/>
</dbReference>
<dbReference type="InterPro" id="IPR001304">
    <property type="entry name" value="C-type_lectin-like"/>
</dbReference>
<dbReference type="InterPro" id="IPR016186">
    <property type="entry name" value="C-type_lectin-like/link_sf"/>
</dbReference>
<dbReference type="InterPro" id="IPR050111">
    <property type="entry name" value="C-type_lectin/snaclec_domain"/>
</dbReference>
<dbReference type="InterPro" id="IPR018378">
    <property type="entry name" value="C-type_lectin_CS"/>
</dbReference>
<dbReference type="InterPro" id="IPR016187">
    <property type="entry name" value="CTDL_fold"/>
</dbReference>
<dbReference type="PANTHER" id="PTHR22803">
    <property type="entry name" value="MANNOSE, PHOSPHOLIPASE, LECTIN RECEPTOR RELATED"/>
    <property type="match status" value="1"/>
</dbReference>
<dbReference type="Pfam" id="PF00059">
    <property type="entry name" value="Lectin_C"/>
    <property type="match status" value="1"/>
</dbReference>
<dbReference type="SMART" id="SM00034">
    <property type="entry name" value="CLECT"/>
    <property type="match status" value="1"/>
</dbReference>
<dbReference type="SUPFAM" id="SSF56436">
    <property type="entry name" value="C-type lectin-like"/>
    <property type="match status" value="1"/>
</dbReference>
<dbReference type="PROSITE" id="PS00615">
    <property type="entry name" value="C_TYPE_LECTIN_1"/>
    <property type="match status" value="1"/>
</dbReference>
<dbReference type="PROSITE" id="PS50041">
    <property type="entry name" value="C_TYPE_LECTIN_2"/>
    <property type="match status" value="1"/>
</dbReference>
<feature type="chain" id="PRO_0000422428" description="Snaclec purpureotin subunit alpha">
    <location>
        <begin position="1"/>
        <end position="133"/>
    </location>
</feature>
<feature type="domain" description="C-type lectin" evidence="1">
    <location>
        <begin position="9"/>
        <end position="128"/>
    </location>
</feature>
<feature type="disulfide bond" evidence="1">
    <location>
        <begin position="2"/>
        <end position="13"/>
    </location>
</feature>
<feature type="disulfide bond" evidence="1">
    <location>
        <begin position="30"/>
        <end position="127"/>
    </location>
</feature>
<feature type="disulfide bond" description="Interchain (with C-75 in subunit beta)" evidence="1">
    <location>
        <position position="79"/>
    </location>
</feature>
<feature type="disulfide bond" evidence="1">
    <location>
        <begin position="102"/>
        <end position="119"/>
    </location>
</feature>
<accession>P0DJL2</accession>
<name>SLA_TRIPP</name>
<proteinExistence type="evidence at protein level"/>
<reference key="1">
    <citation type="journal article" date="2004" name="Arch. Biochem. Biophys.">
        <title>Purpureotin: a novel di-dimeric C-type lectin-like protein from Trimeresurus purpureomaculatus venom is stabilized by noncovalent interactions.</title>
        <authorList>
            <person name="Li X."/>
            <person name="Zheng L."/>
            <person name="Kong C."/>
            <person name="Kolatkar P.R."/>
            <person name="Chung M.C."/>
        </authorList>
    </citation>
    <scope>PROTEIN SEQUENCE</scope>
    <scope>FUNCTION</scope>
    <scope>SUBUNIT</scope>
    <source>
        <tissue>Venom</tissue>
    </source>
</reference>
<organism>
    <name type="scientific">Trimeresurus purpureomaculatus</name>
    <name type="common">Mangrove pit viper</name>
    <name type="synonym">Cryptelytrops purpureomaculatus</name>
    <dbReference type="NCBI Taxonomy" id="101163"/>
    <lineage>
        <taxon>Eukaryota</taxon>
        <taxon>Metazoa</taxon>
        <taxon>Chordata</taxon>
        <taxon>Craniata</taxon>
        <taxon>Vertebrata</taxon>
        <taxon>Euteleostomi</taxon>
        <taxon>Lepidosauria</taxon>
        <taxon>Squamata</taxon>
        <taxon>Bifurcata</taxon>
        <taxon>Unidentata</taxon>
        <taxon>Episquamata</taxon>
        <taxon>Toxicofera</taxon>
        <taxon>Serpentes</taxon>
        <taxon>Colubroidea</taxon>
        <taxon>Viperidae</taxon>
        <taxon>Crotalinae</taxon>
        <taxon>Trimeresurus</taxon>
    </lineage>
</organism>
<sequence>DCPSDWSSFKQYCYQIIKQLKTWEDAERFCLDQMKGAHLVSIESYREAVFVAELLSENVKTTKYHVWIGLSVQNKGQQCSSEWSDGSTVSYENLVKPNPKKCFVLKKESEFRTWSNVYCEQKHIFMCKFLGSR</sequence>
<evidence type="ECO:0000255" key="1">
    <source>
        <dbReference type="PROSITE-ProRule" id="PRU00040"/>
    </source>
</evidence>
<evidence type="ECO:0000269" key="2">
    <source>
    </source>
</evidence>
<evidence type="ECO:0000305" key="3"/>
<keyword id="KW-0903">Direct protein sequencing</keyword>
<keyword id="KW-1015">Disulfide bond</keyword>
<keyword id="KW-1199">Hemostasis impairing toxin</keyword>
<keyword id="KW-1202">Platelet aggregation activating toxin</keyword>
<keyword id="KW-0964">Secreted</keyword>
<keyword id="KW-0800">Toxin</keyword>
<protein>
    <recommendedName>
        <fullName>Snaclec purpureotin subunit alpha</fullName>
    </recommendedName>
</protein>
<comment type="function">
    <text evidence="2">Snaclec that induces platelet aggregation without any cofactor in a dose-dependent manner. Its platelet aggregation effect is blocked by echicetin, suggesting it is a GPIb-binding protein which binds to the same or a closely related GPIb site on platelets as echicetin.</text>
</comment>
<comment type="subunit">
    <text evidence="2">Homodimer (non-covalently linked) of heterodimer of alpha and beta subunits (disulfide-linked).</text>
</comment>
<comment type="subcellular location">
    <subcellularLocation>
        <location>Secreted</location>
    </subcellularLocation>
</comment>
<comment type="tissue specificity">
    <text>Expressed by the venom gland.</text>
</comment>
<comment type="similarity">
    <text evidence="3">Belongs to the snaclec family.</text>
</comment>